<gene>
    <name evidence="1" type="primary">rpsM</name>
    <name type="ordered locus">TTE2266</name>
</gene>
<reference key="1">
    <citation type="journal article" date="2002" name="Genome Res.">
        <title>A complete sequence of the T. tengcongensis genome.</title>
        <authorList>
            <person name="Bao Q."/>
            <person name="Tian Y."/>
            <person name="Li W."/>
            <person name="Xu Z."/>
            <person name="Xuan Z."/>
            <person name="Hu S."/>
            <person name="Dong W."/>
            <person name="Yang J."/>
            <person name="Chen Y."/>
            <person name="Xue Y."/>
            <person name="Xu Y."/>
            <person name="Lai X."/>
            <person name="Huang L."/>
            <person name="Dong X."/>
            <person name="Ma Y."/>
            <person name="Ling L."/>
            <person name="Tan H."/>
            <person name="Chen R."/>
            <person name="Wang J."/>
            <person name="Yu J."/>
            <person name="Yang H."/>
        </authorList>
    </citation>
    <scope>NUCLEOTIDE SEQUENCE [LARGE SCALE GENOMIC DNA]</scope>
    <source>
        <strain>DSM 15242 / JCM 11007 / NBRC 100824 / MB4</strain>
    </source>
</reference>
<name>RS13_CALS4</name>
<organism>
    <name type="scientific">Caldanaerobacter subterraneus subsp. tengcongensis (strain DSM 15242 / JCM 11007 / NBRC 100824 / MB4)</name>
    <name type="common">Thermoanaerobacter tengcongensis</name>
    <dbReference type="NCBI Taxonomy" id="273068"/>
    <lineage>
        <taxon>Bacteria</taxon>
        <taxon>Bacillati</taxon>
        <taxon>Bacillota</taxon>
        <taxon>Clostridia</taxon>
        <taxon>Thermoanaerobacterales</taxon>
        <taxon>Thermoanaerobacteraceae</taxon>
        <taxon>Caldanaerobacter</taxon>
    </lineage>
</organism>
<accession>Q8R7X9</accession>
<feature type="chain" id="PRO_0000132161" description="Small ribosomal subunit protein uS13">
    <location>
        <begin position="1"/>
        <end position="122"/>
    </location>
</feature>
<feature type="region of interest" description="Disordered" evidence="2">
    <location>
        <begin position="97"/>
        <end position="122"/>
    </location>
</feature>
<feature type="compositionally biased region" description="Basic residues" evidence="2">
    <location>
        <begin position="101"/>
        <end position="122"/>
    </location>
</feature>
<comment type="function">
    <text evidence="1">Located at the top of the head of the 30S subunit, it contacts several helices of the 16S rRNA. In the 70S ribosome it contacts the 23S rRNA (bridge B1a) and protein L5 of the 50S subunit (bridge B1b), connecting the 2 subunits; these bridges are implicated in subunit movement. Contacts the tRNAs in the A and P-sites.</text>
</comment>
<comment type="subunit">
    <text evidence="1">Part of the 30S ribosomal subunit. Forms a loose heterodimer with protein S19. Forms two bridges to the 50S subunit in the 70S ribosome.</text>
</comment>
<comment type="similarity">
    <text evidence="1">Belongs to the universal ribosomal protein uS13 family.</text>
</comment>
<keyword id="KW-1185">Reference proteome</keyword>
<keyword id="KW-0687">Ribonucleoprotein</keyword>
<keyword id="KW-0689">Ribosomal protein</keyword>
<keyword id="KW-0694">RNA-binding</keyword>
<keyword id="KW-0699">rRNA-binding</keyword>
<keyword id="KW-0820">tRNA-binding</keyword>
<protein>
    <recommendedName>
        <fullName evidence="1">Small ribosomal subunit protein uS13</fullName>
    </recommendedName>
    <alternativeName>
        <fullName evidence="3">30S ribosomal protein S13</fullName>
    </alternativeName>
</protein>
<dbReference type="EMBL" id="AE008691">
    <property type="protein sequence ID" value="AAM25410.1"/>
    <property type="molecule type" value="Genomic_DNA"/>
</dbReference>
<dbReference type="RefSeq" id="WP_011026313.1">
    <property type="nucleotide sequence ID" value="NZ_JANUCV010000001.1"/>
</dbReference>
<dbReference type="SMR" id="Q8R7X9"/>
<dbReference type="STRING" id="273068.TTE2266"/>
<dbReference type="KEGG" id="tte:TTE2266"/>
<dbReference type="eggNOG" id="COG0099">
    <property type="taxonomic scope" value="Bacteria"/>
</dbReference>
<dbReference type="HOGENOM" id="CLU_103849_1_2_9"/>
<dbReference type="OrthoDB" id="9803610at2"/>
<dbReference type="Proteomes" id="UP000000555">
    <property type="component" value="Chromosome"/>
</dbReference>
<dbReference type="GO" id="GO:0005829">
    <property type="term" value="C:cytosol"/>
    <property type="evidence" value="ECO:0007669"/>
    <property type="project" value="TreeGrafter"/>
</dbReference>
<dbReference type="GO" id="GO:0015935">
    <property type="term" value="C:small ribosomal subunit"/>
    <property type="evidence" value="ECO:0007669"/>
    <property type="project" value="TreeGrafter"/>
</dbReference>
<dbReference type="GO" id="GO:0019843">
    <property type="term" value="F:rRNA binding"/>
    <property type="evidence" value="ECO:0007669"/>
    <property type="project" value="UniProtKB-UniRule"/>
</dbReference>
<dbReference type="GO" id="GO:0003735">
    <property type="term" value="F:structural constituent of ribosome"/>
    <property type="evidence" value="ECO:0007669"/>
    <property type="project" value="InterPro"/>
</dbReference>
<dbReference type="GO" id="GO:0000049">
    <property type="term" value="F:tRNA binding"/>
    <property type="evidence" value="ECO:0007669"/>
    <property type="project" value="UniProtKB-UniRule"/>
</dbReference>
<dbReference type="GO" id="GO:0006412">
    <property type="term" value="P:translation"/>
    <property type="evidence" value="ECO:0007669"/>
    <property type="project" value="UniProtKB-UniRule"/>
</dbReference>
<dbReference type="FunFam" id="1.10.8.50:FF:000001">
    <property type="entry name" value="30S ribosomal protein S13"/>
    <property type="match status" value="1"/>
</dbReference>
<dbReference type="FunFam" id="4.10.910.10:FF:000001">
    <property type="entry name" value="30S ribosomal protein S13"/>
    <property type="match status" value="1"/>
</dbReference>
<dbReference type="Gene3D" id="1.10.8.50">
    <property type="match status" value="1"/>
</dbReference>
<dbReference type="Gene3D" id="4.10.910.10">
    <property type="entry name" value="30s ribosomal protein s13, domain 2"/>
    <property type="match status" value="1"/>
</dbReference>
<dbReference type="HAMAP" id="MF_01315">
    <property type="entry name" value="Ribosomal_uS13"/>
    <property type="match status" value="1"/>
</dbReference>
<dbReference type="InterPro" id="IPR027437">
    <property type="entry name" value="Rbsml_uS13_C"/>
</dbReference>
<dbReference type="InterPro" id="IPR001892">
    <property type="entry name" value="Ribosomal_uS13"/>
</dbReference>
<dbReference type="InterPro" id="IPR010979">
    <property type="entry name" value="Ribosomal_uS13-like_H2TH"/>
</dbReference>
<dbReference type="InterPro" id="IPR019980">
    <property type="entry name" value="Ribosomal_uS13_bac-type"/>
</dbReference>
<dbReference type="InterPro" id="IPR018269">
    <property type="entry name" value="Ribosomal_uS13_CS"/>
</dbReference>
<dbReference type="NCBIfam" id="TIGR03631">
    <property type="entry name" value="uS13_bact"/>
    <property type="match status" value="1"/>
</dbReference>
<dbReference type="PANTHER" id="PTHR10871">
    <property type="entry name" value="30S RIBOSOMAL PROTEIN S13/40S RIBOSOMAL PROTEIN S18"/>
    <property type="match status" value="1"/>
</dbReference>
<dbReference type="PANTHER" id="PTHR10871:SF1">
    <property type="entry name" value="SMALL RIBOSOMAL SUBUNIT PROTEIN US13M"/>
    <property type="match status" value="1"/>
</dbReference>
<dbReference type="Pfam" id="PF00416">
    <property type="entry name" value="Ribosomal_S13"/>
    <property type="match status" value="1"/>
</dbReference>
<dbReference type="PIRSF" id="PIRSF002134">
    <property type="entry name" value="Ribosomal_S13"/>
    <property type="match status" value="1"/>
</dbReference>
<dbReference type="SUPFAM" id="SSF46946">
    <property type="entry name" value="S13-like H2TH domain"/>
    <property type="match status" value="1"/>
</dbReference>
<dbReference type="PROSITE" id="PS00646">
    <property type="entry name" value="RIBOSOMAL_S13_1"/>
    <property type="match status" value="1"/>
</dbReference>
<dbReference type="PROSITE" id="PS50159">
    <property type="entry name" value="RIBOSOMAL_S13_2"/>
    <property type="match status" value="1"/>
</dbReference>
<proteinExistence type="inferred from homology"/>
<sequence length="122" mass="13997">MARIAGVDLPRDKRVEIALTYIYGIGRSRSKEILAKAGVNPDTRVRDLTEDEVSKLREIIEKEYKVEGDLRKEVAMNIKRLIDIGCYRGIRHKLGLPVRGQRTRTNARTRKGPRKTVAKKKK</sequence>
<evidence type="ECO:0000255" key="1">
    <source>
        <dbReference type="HAMAP-Rule" id="MF_01315"/>
    </source>
</evidence>
<evidence type="ECO:0000256" key="2">
    <source>
        <dbReference type="SAM" id="MobiDB-lite"/>
    </source>
</evidence>
<evidence type="ECO:0000305" key="3"/>